<accession>Q9M1U2</accession>
<accession>A3E4C3</accession>
<dbReference type="EMBL" id="AL138649">
    <property type="protein sequence ID" value="CAB72155.1"/>
    <property type="molecule type" value="Genomic_DNA"/>
</dbReference>
<dbReference type="EMBL" id="CP002686">
    <property type="protein sequence ID" value="AEE78000.1"/>
    <property type="molecule type" value="Genomic_DNA"/>
</dbReference>
<dbReference type="EMBL" id="DQ875133">
    <property type="protein sequence ID" value="ABL73203.1"/>
    <property type="molecule type" value="mRNA"/>
</dbReference>
<dbReference type="PIR" id="T47457">
    <property type="entry name" value="T47457"/>
</dbReference>
<dbReference type="RefSeq" id="NP_190103.1">
    <property type="nucleotide sequence ID" value="NM_114386.2"/>
</dbReference>
<dbReference type="SMR" id="Q9M1U2"/>
<dbReference type="BioGRID" id="8973">
    <property type="interactions" value="7"/>
</dbReference>
<dbReference type="IntAct" id="Q9M1U2">
    <property type="interactions" value="7"/>
</dbReference>
<dbReference type="STRING" id="3702.Q9M1U2"/>
<dbReference type="PaxDb" id="3702-AT3G45170.1"/>
<dbReference type="ProteomicsDB" id="248570"/>
<dbReference type="EnsemblPlants" id="AT3G45170.1">
    <property type="protein sequence ID" value="AT3G45170.1"/>
    <property type="gene ID" value="AT3G45170"/>
</dbReference>
<dbReference type="GeneID" id="823653"/>
<dbReference type="Gramene" id="AT3G45170.1">
    <property type="protein sequence ID" value="AT3G45170.1"/>
    <property type="gene ID" value="AT3G45170"/>
</dbReference>
<dbReference type="KEGG" id="ath:AT3G45170"/>
<dbReference type="Araport" id="AT3G45170"/>
<dbReference type="TAIR" id="AT3G45170">
    <property type="gene designation" value="GATA14"/>
</dbReference>
<dbReference type="eggNOG" id="KOG1601">
    <property type="taxonomic scope" value="Eukaryota"/>
</dbReference>
<dbReference type="HOGENOM" id="CLU_1344899_0_0_1"/>
<dbReference type="InParanoid" id="Q9M1U2"/>
<dbReference type="OMA" id="NVHSNFH"/>
<dbReference type="PhylomeDB" id="Q9M1U2"/>
<dbReference type="PRO" id="PR:Q9M1U2"/>
<dbReference type="Proteomes" id="UP000006548">
    <property type="component" value="Chromosome 3"/>
</dbReference>
<dbReference type="ExpressionAtlas" id="Q9M1U2">
    <property type="expression patterns" value="baseline"/>
</dbReference>
<dbReference type="GO" id="GO:0005634">
    <property type="term" value="C:nucleus"/>
    <property type="evidence" value="ECO:0007669"/>
    <property type="project" value="UniProtKB-SubCell"/>
</dbReference>
<dbReference type="GO" id="GO:0003700">
    <property type="term" value="F:DNA-binding transcription factor activity"/>
    <property type="evidence" value="ECO:0000250"/>
    <property type="project" value="TAIR"/>
</dbReference>
<dbReference type="GO" id="GO:0043565">
    <property type="term" value="F:sequence-specific DNA binding"/>
    <property type="evidence" value="ECO:0007669"/>
    <property type="project" value="InterPro"/>
</dbReference>
<dbReference type="GO" id="GO:0008270">
    <property type="term" value="F:zinc ion binding"/>
    <property type="evidence" value="ECO:0007669"/>
    <property type="project" value="UniProtKB-KW"/>
</dbReference>
<dbReference type="GO" id="GO:0006355">
    <property type="term" value="P:regulation of DNA-templated transcription"/>
    <property type="evidence" value="ECO:0000304"/>
    <property type="project" value="TAIR"/>
</dbReference>
<dbReference type="CDD" id="cd00202">
    <property type="entry name" value="ZnF_GATA"/>
    <property type="match status" value="1"/>
</dbReference>
<dbReference type="FunFam" id="3.30.50.10:FF:000025">
    <property type="entry name" value="GATA transcription factor"/>
    <property type="match status" value="1"/>
</dbReference>
<dbReference type="Gene3D" id="3.30.50.10">
    <property type="entry name" value="Erythroid Transcription Factor GATA-1, subunit A"/>
    <property type="match status" value="1"/>
</dbReference>
<dbReference type="InterPro" id="IPR051140">
    <property type="entry name" value="GATA_TF"/>
</dbReference>
<dbReference type="InterPro" id="IPR000679">
    <property type="entry name" value="Znf_GATA"/>
</dbReference>
<dbReference type="InterPro" id="IPR013088">
    <property type="entry name" value="Znf_NHR/GATA"/>
</dbReference>
<dbReference type="PANTHER" id="PTHR45658">
    <property type="entry name" value="GATA TRANSCRIPTION FACTOR"/>
    <property type="match status" value="1"/>
</dbReference>
<dbReference type="PANTHER" id="PTHR45658:SF18">
    <property type="entry name" value="PROTEIN GAT2"/>
    <property type="match status" value="1"/>
</dbReference>
<dbReference type="Pfam" id="PF00320">
    <property type="entry name" value="GATA"/>
    <property type="match status" value="1"/>
</dbReference>
<dbReference type="SMART" id="SM00401">
    <property type="entry name" value="ZnF_GATA"/>
    <property type="match status" value="1"/>
</dbReference>
<dbReference type="SUPFAM" id="SSF57716">
    <property type="entry name" value="Glucocorticoid receptor-like (DNA-binding domain)"/>
    <property type="match status" value="1"/>
</dbReference>
<dbReference type="PROSITE" id="PS00344">
    <property type="entry name" value="GATA_ZN_FINGER_1"/>
    <property type="match status" value="1"/>
</dbReference>
<dbReference type="PROSITE" id="PS50114">
    <property type="entry name" value="GATA_ZN_FINGER_2"/>
    <property type="match status" value="1"/>
</dbReference>
<evidence type="ECO:0000250" key="1"/>
<evidence type="ECO:0000255" key="2">
    <source>
        <dbReference type="PROSITE-ProRule" id="PRU00094"/>
    </source>
</evidence>
<evidence type="ECO:0000256" key="3">
    <source>
        <dbReference type="SAM" id="MobiDB-lite"/>
    </source>
</evidence>
<evidence type="ECO:0000305" key="4"/>
<gene>
    <name type="primary">GATA14</name>
    <name type="ordered locus">At3g45170</name>
    <name type="ORF">T14D3.110</name>
</gene>
<organism>
    <name type="scientific">Arabidopsis thaliana</name>
    <name type="common">Mouse-ear cress</name>
    <dbReference type="NCBI Taxonomy" id="3702"/>
    <lineage>
        <taxon>Eukaryota</taxon>
        <taxon>Viridiplantae</taxon>
        <taxon>Streptophyta</taxon>
        <taxon>Embryophyta</taxon>
        <taxon>Tracheophyta</taxon>
        <taxon>Spermatophyta</taxon>
        <taxon>Magnoliopsida</taxon>
        <taxon>eudicotyledons</taxon>
        <taxon>Gunneridae</taxon>
        <taxon>Pentapetalae</taxon>
        <taxon>rosids</taxon>
        <taxon>malvids</taxon>
        <taxon>Brassicales</taxon>
        <taxon>Brassicaceae</taxon>
        <taxon>Camelineae</taxon>
        <taxon>Arabidopsis</taxon>
    </lineage>
</organism>
<name>GAT14_ARATH</name>
<reference key="1">
    <citation type="journal article" date="2000" name="Nature">
        <title>Sequence and analysis of chromosome 3 of the plant Arabidopsis thaliana.</title>
        <authorList>
            <person name="Salanoubat M."/>
            <person name="Lemcke K."/>
            <person name="Rieger M."/>
            <person name="Ansorge W."/>
            <person name="Unseld M."/>
            <person name="Fartmann B."/>
            <person name="Valle G."/>
            <person name="Bloecker H."/>
            <person name="Perez-Alonso M."/>
            <person name="Obermaier B."/>
            <person name="Delseny M."/>
            <person name="Boutry M."/>
            <person name="Grivell L.A."/>
            <person name="Mache R."/>
            <person name="Puigdomenech P."/>
            <person name="De Simone V."/>
            <person name="Choisne N."/>
            <person name="Artiguenave F."/>
            <person name="Robert C."/>
            <person name="Brottier P."/>
            <person name="Wincker P."/>
            <person name="Cattolico L."/>
            <person name="Weissenbach J."/>
            <person name="Saurin W."/>
            <person name="Quetier F."/>
            <person name="Schaefer M."/>
            <person name="Mueller-Auer S."/>
            <person name="Gabel C."/>
            <person name="Fuchs M."/>
            <person name="Benes V."/>
            <person name="Wurmbach E."/>
            <person name="Drzonek H."/>
            <person name="Erfle H."/>
            <person name="Jordan N."/>
            <person name="Bangert S."/>
            <person name="Wiedelmann R."/>
            <person name="Kranz H."/>
            <person name="Voss H."/>
            <person name="Holland R."/>
            <person name="Brandt P."/>
            <person name="Nyakatura G."/>
            <person name="Vezzi A."/>
            <person name="D'Angelo M."/>
            <person name="Pallavicini A."/>
            <person name="Toppo S."/>
            <person name="Simionati B."/>
            <person name="Conrad A."/>
            <person name="Hornischer K."/>
            <person name="Kauer G."/>
            <person name="Loehnert T.-H."/>
            <person name="Nordsiek G."/>
            <person name="Reichelt J."/>
            <person name="Scharfe M."/>
            <person name="Schoen O."/>
            <person name="Bargues M."/>
            <person name="Terol J."/>
            <person name="Climent J."/>
            <person name="Navarro P."/>
            <person name="Collado C."/>
            <person name="Perez-Perez A."/>
            <person name="Ottenwaelder B."/>
            <person name="Duchemin D."/>
            <person name="Cooke R."/>
            <person name="Laudie M."/>
            <person name="Berger-Llauro C."/>
            <person name="Purnelle B."/>
            <person name="Masuy D."/>
            <person name="de Haan M."/>
            <person name="Maarse A.C."/>
            <person name="Alcaraz J.-P."/>
            <person name="Cottet A."/>
            <person name="Casacuberta E."/>
            <person name="Monfort A."/>
            <person name="Argiriou A."/>
            <person name="Flores M."/>
            <person name="Liguori R."/>
            <person name="Vitale D."/>
            <person name="Mannhaupt G."/>
            <person name="Haase D."/>
            <person name="Schoof H."/>
            <person name="Rudd S."/>
            <person name="Zaccaria P."/>
            <person name="Mewes H.-W."/>
            <person name="Mayer K.F.X."/>
            <person name="Kaul S."/>
            <person name="Town C.D."/>
            <person name="Koo H.L."/>
            <person name="Tallon L.J."/>
            <person name="Jenkins J."/>
            <person name="Rooney T."/>
            <person name="Rizzo M."/>
            <person name="Walts A."/>
            <person name="Utterback T."/>
            <person name="Fujii C.Y."/>
            <person name="Shea T.P."/>
            <person name="Creasy T.H."/>
            <person name="Haas B."/>
            <person name="Maiti R."/>
            <person name="Wu D."/>
            <person name="Peterson J."/>
            <person name="Van Aken S."/>
            <person name="Pai G."/>
            <person name="Militscher J."/>
            <person name="Sellers P."/>
            <person name="Gill J.E."/>
            <person name="Feldblyum T.V."/>
            <person name="Preuss D."/>
            <person name="Lin X."/>
            <person name="Nierman W.C."/>
            <person name="Salzberg S.L."/>
            <person name="White O."/>
            <person name="Venter J.C."/>
            <person name="Fraser C.M."/>
            <person name="Kaneko T."/>
            <person name="Nakamura Y."/>
            <person name="Sato S."/>
            <person name="Kato T."/>
            <person name="Asamizu E."/>
            <person name="Sasamoto S."/>
            <person name="Kimura T."/>
            <person name="Idesawa K."/>
            <person name="Kawashima K."/>
            <person name="Kishida Y."/>
            <person name="Kiyokawa C."/>
            <person name="Kohara M."/>
            <person name="Matsumoto M."/>
            <person name="Matsuno A."/>
            <person name="Muraki A."/>
            <person name="Nakayama S."/>
            <person name="Nakazaki N."/>
            <person name="Shinpo S."/>
            <person name="Takeuchi C."/>
            <person name="Wada T."/>
            <person name="Watanabe A."/>
            <person name="Yamada M."/>
            <person name="Yasuda M."/>
            <person name="Tabata S."/>
        </authorList>
    </citation>
    <scope>NUCLEOTIDE SEQUENCE [LARGE SCALE GENOMIC DNA]</scope>
    <source>
        <strain>cv. Columbia</strain>
    </source>
</reference>
<reference key="2">
    <citation type="journal article" date="2017" name="Plant J.">
        <title>Araport11: a complete reannotation of the Arabidopsis thaliana reference genome.</title>
        <authorList>
            <person name="Cheng C.Y."/>
            <person name="Krishnakumar V."/>
            <person name="Chan A.P."/>
            <person name="Thibaud-Nissen F."/>
            <person name="Schobel S."/>
            <person name="Town C.D."/>
        </authorList>
    </citation>
    <scope>GENOME REANNOTATION</scope>
    <source>
        <strain>cv. Columbia</strain>
    </source>
</reference>
<reference key="3">
    <citation type="journal article" date="2007" name="Plant Physiol.">
        <title>Conservation, convergence, and divergence of light-responsive, circadian-regulated, and tissue-specific expression patterns during evolution of the Arabidopsis GATA gene family.</title>
        <authorList>
            <person name="Manfield I.W."/>
            <person name="Devlin P.F."/>
            <person name="Jen C.-H."/>
            <person name="Westhead D.R."/>
            <person name="Gilmartin P.M."/>
        </authorList>
    </citation>
    <scope>NUCLEOTIDE SEQUENCE [MRNA] OF 164-204</scope>
</reference>
<reference key="4">
    <citation type="journal article" date="2004" name="Plant Physiol.">
        <title>The GATA family of transcription factors in Arabidopsis and rice.</title>
        <authorList>
            <person name="Reyes J.C."/>
            <person name="Muro-Pastor M.I."/>
            <person name="Florencio F.J."/>
        </authorList>
    </citation>
    <scope>GENE FAMILY ORGANIZATION</scope>
</reference>
<feature type="chain" id="PRO_0000083437" description="GATA transcription factor 14">
    <location>
        <begin position="1"/>
        <end position="204"/>
    </location>
</feature>
<feature type="zinc finger region" description="GATA-type" evidence="2">
    <location>
        <begin position="111"/>
        <end position="165"/>
    </location>
</feature>
<feature type="region of interest" description="Disordered" evidence="3">
    <location>
        <begin position="57"/>
        <end position="102"/>
    </location>
</feature>
<feature type="region of interest" description="Disordered" evidence="3">
    <location>
        <begin position="180"/>
        <end position="204"/>
    </location>
</feature>
<feature type="compositionally biased region" description="Basic and acidic residues" evidence="3">
    <location>
        <begin position="57"/>
        <end position="66"/>
    </location>
</feature>
<feature type="compositionally biased region" description="Basic residues" evidence="3">
    <location>
        <begin position="79"/>
        <end position="98"/>
    </location>
</feature>
<feature type="compositionally biased region" description="Polar residues" evidence="3">
    <location>
        <begin position="185"/>
        <end position="196"/>
    </location>
</feature>
<proteinExistence type="evidence at transcript level"/>
<keyword id="KW-0010">Activator</keyword>
<keyword id="KW-0238">DNA-binding</keyword>
<keyword id="KW-0479">Metal-binding</keyword>
<keyword id="KW-0539">Nucleus</keyword>
<keyword id="KW-1185">Reference proteome</keyword>
<keyword id="KW-0804">Transcription</keyword>
<keyword id="KW-0805">Transcription regulation</keyword>
<keyword id="KW-0862">Zinc</keyword>
<keyword id="KW-0863">Zinc-finger</keyword>
<sequence>MSGREDEEEDLGTAMQKIPIPVNVFDKEPMDLDTVFGFADGVREIIEDSNLLLEESREFDTNDSKPSRNFSNLPTATRGRLHAPKRSGNKRGRQKRLSFKSPSDLFDSKFGITDKSCSHCGTRKTPLWREGPRGAGTLCNACGMRYRTGRLLPEYRPASSPDFKPNVHSNFHRKVMEIRRERKSSPPNSFGFSESYHSTRKLGF</sequence>
<protein>
    <recommendedName>
        <fullName>GATA transcription factor 14</fullName>
    </recommendedName>
</protein>
<comment type="function">
    <text evidence="1">Transcriptional activator that specifically binds 5'-GATA-3' or 5'-GAT-3' motifs within gene promoters. May be involved in the regulation of some light-responsive genes (By similarity).</text>
</comment>
<comment type="subcellular location">
    <subcellularLocation>
        <location evidence="4">Nucleus</location>
    </subcellularLocation>
</comment>
<comment type="similarity">
    <text evidence="4">Belongs to the type IV zinc-finger family. Class A subfamily.</text>
</comment>